<keyword id="KW-0963">Cytoplasm</keyword>
<keyword id="KW-0238">DNA-binding</keyword>
<keyword id="KW-1185">Reference proteome</keyword>
<keyword id="KW-0678">Repressor</keyword>
<keyword id="KW-0804">Transcription</keyword>
<keyword id="KW-0805">Transcription regulation</keyword>
<gene>
    <name evidence="1" type="primary">codY</name>
    <name type="ordered locus">spr1439</name>
</gene>
<sequence length="262" mass="29756">MAHLLEKTRKITSILKRSEEQLQDELPYNAITRQLADIIHCNACIINSKGRLLGYFMRYKTNTDRVEQFFQTKIFPDDYVQGANMIYETEANLPVEHDMSIFPVESRDDFPDGLTTIAPIHVSGIRLGSLIIWRNDKKFEDEDLVLVEIASTVVGIQLLNFQREEDEKNIRRRTAVTMAVNTLSYSELRAVSAILGELNGNEGQLTASVIADRIGITRSVIVNALRKLESAGIIESRSLGMKGTYLKVLISDIFEEVKKRDY</sequence>
<accession>Q8DP01</accession>
<protein>
    <recommendedName>
        <fullName evidence="1">Global transcriptional regulator CodY</fullName>
    </recommendedName>
</protein>
<feature type="chain" id="PRO_0000213243" description="Global transcriptional regulator CodY">
    <location>
        <begin position="1"/>
        <end position="262"/>
    </location>
</feature>
<feature type="DNA-binding region" description="H-T-H motif" evidence="1">
    <location>
        <begin position="207"/>
        <end position="226"/>
    </location>
</feature>
<feature type="region of interest" description="GAF domain" evidence="1">
    <location>
        <begin position="1"/>
        <end position="159"/>
    </location>
</feature>
<reference key="1">
    <citation type="journal article" date="2001" name="J. Bacteriol.">
        <title>Genome of the bacterium Streptococcus pneumoniae strain R6.</title>
        <authorList>
            <person name="Hoskins J."/>
            <person name="Alborn W.E. Jr."/>
            <person name="Arnold J."/>
            <person name="Blaszczak L.C."/>
            <person name="Burgett S."/>
            <person name="DeHoff B.S."/>
            <person name="Estrem S.T."/>
            <person name="Fritz L."/>
            <person name="Fu D.-J."/>
            <person name="Fuller W."/>
            <person name="Geringer C."/>
            <person name="Gilmour R."/>
            <person name="Glass J.S."/>
            <person name="Khoja H."/>
            <person name="Kraft A.R."/>
            <person name="Lagace R.E."/>
            <person name="LeBlanc D.J."/>
            <person name="Lee L.N."/>
            <person name="Lefkowitz E.J."/>
            <person name="Lu J."/>
            <person name="Matsushima P."/>
            <person name="McAhren S.M."/>
            <person name="McHenney M."/>
            <person name="McLeaster K."/>
            <person name="Mundy C.W."/>
            <person name="Nicas T.I."/>
            <person name="Norris F.H."/>
            <person name="O'Gara M."/>
            <person name="Peery R.B."/>
            <person name="Robertson G.T."/>
            <person name="Rockey P."/>
            <person name="Sun P.-M."/>
            <person name="Winkler M.E."/>
            <person name="Yang Y."/>
            <person name="Young-Bellido M."/>
            <person name="Zhao G."/>
            <person name="Zook C.A."/>
            <person name="Baltz R.H."/>
            <person name="Jaskunas S.R."/>
            <person name="Rosteck P.R. Jr."/>
            <person name="Skatrud P.L."/>
            <person name="Glass J.I."/>
        </authorList>
    </citation>
    <scope>NUCLEOTIDE SEQUENCE [LARGE SCALE GENOMIC DNA]</scope>
    <source>
        <strain>ATCC BAA-255 / R6</strain>
    </source>
</reference>
<dbReference type="EMBL" id="AE007317">
    <property type="protein sequence ID" value="AAL00243.1"/>
    <property type="molecule type" value="Genomic_DNA"/>
</dbReference>
<dbReference type="PIR" id="F98051">
    <property type="entry name" value="F98051"/>
</dbReference>
<dbReference type="RefSeq" id="NP_359032.1">
    <property type="nucleotide sequence ID" value="NC_003098.1"/>
</dbReference>
<dbReference type="RefSeq" id="WP_000940734.1">
    <property type="nucleotide sequence ID" value="NC_003098.1"/>
</dbReference>
<dbReference type="SMR" id="Q8DP01"/>
<dbReference type="STRING" id="171101.spr1439"/>
<dbReference type="KEGG" id="spr:spr1439"/>
<dbReference type="PATRIC" id="fig|171101.6.peg.1555"/>
<dbReference type="eggNOG" id="COG4465">
    <property type="taxonomic scope" value="Bacteria"/>
</dbReference>
<dbReference type="HOGENOM" id="CLU_089581_0_0_9"/>
<dbReference type="Proteomes" id="UP000000586">
    <property type="component" value="Chromosome"/>
</dbReference>
<dbReference type="GO" id="GO:0005737">
    <property type="term" value="C:cytoplasm"/>
    <property type="evidence" value="ECO:0007669"/>
    <property type="project" value="UniProtKB-SubCell"/>
</dbReference>
<dbReference type="GO" id="GO:0003677">
    <property type="term" value="F:DNA binding"/>
    <property type="evidence" value="ECO:0007669"/>
    <property type="project" value="UniProtKB-UniRule"/>
</dbReference>
<dbReference type="GO" id="GO:0003700">
    <property type="term" value="F:DNA-binding transcription factor activity"/>
    <property type="evidence" value="ECO:0007669"/>
    <property type="project" value="InterPro"/>
</dbReference>
<dbReference type="GO" id="GO:0005525">
    <property type="term" value="F:GTP binding"/>
    <property type="evidence" value="ECO:0007669"/>
    <property type="project" value="InterPro"/>
</dbReference>
<dbReference type="GO" id="GO:0045892">
    <property type="term" value="P:negative regulation of DNA-templated transcription"/>
    <property type="evidence" value="ECO:0007669"/>
    <property type="project" value="UniProtKB-UniRule"/>
</dbReference>
<dbReference type="GO" id="GO:0006355">
    <property type="term" value="P:regulation of DNA-templated transcription"/>
    <property type="evidence" value="ECO:0000318"/>
    <property type="project" value="GO_Central"/>
</dbReference>
<dbReference type="CDD" id="cd00090">
    <property type="entry name" value="HTH_ARSR"/>
    <property type="match status" value="1"/>
</dbReference>
<dbReference type="FunFam" id="1.10.10.10:FF:000034">
    <property type="entry name" value="GTP-sensing transcriptional pleiotropic repressor CodY"/>
    <property type="match status" value="1"/>
</dbReference>
<dbReference type="FunFam" id="3.30.450.40:FF:000003">
    <property type="entry name" value="GTP-sensing transcriptional pleiotropic repressor CodY"/>
    <property type="match status" value="1"/>
</dbReference>
<dbReference type="Gene3D" id="3.30.450.40">
    <property type="match status" value="1"/>
</dbReference>
<dbReference type="Gene3D" id="1.10.10.10">
    <property type="entry name" value="Winged helix-like DNA-binding domain superfamily/Winged helix DNA-binding domain"/>
    <property type="match status" value="1"/>
</dbReference>
<dbReference type="HAMAP" id="MF_00621">
    <property type="entry name" value="HTH_type_CodY"/>
    <property type="match status" value="1"/>
</dbReference>
<dbReference type="InterPro" id="IPR011991">
    <property type="entry name" value="ArsR-like_HTH"/>
</dbReference>
<dbReference type="InterPro" id="IPR014154">
    <property type="entry name" value="CodY"/>
</dbReference>
<dbReference type="InterPro" id="IPR029016">
    <property type="entry name" value="GAF-like_dom_sf"/>
</dbReference>
<dbReference type="InterPro" id="IPR013198">
    <property type="entry name" value="GTP_trans_reg_CodY_C"/>
</dbReference>
<dbReference type="InterPro" id="IPR010312">
    <property type="entry name" value="Transc_reg_CodY_N"/>
</dbReference>
<dbReference type="InterPro" id="IPR036388">
    <property type="entry name" value="WH-like_DNA-bd_sf"/>
</dbReference>
<dbReference type="InterPro" id="IPR036390">
    <property type="entry name" value="WH_DNA-bd_sf"/>
</dbReference>
<dbReference type="NCBIfam" id="TIGR02787">
    <property type="entry name" value="codY_Gpos"/>
    <property type="match status" value="1"/>
</dbReference>
<dbReference type="NCBIfam" id="NF003170">
    <property type="entry name" value="PRK04158.1"/>
    <property type="match status" value="1"/>
</dbReference>
<dbReference type="PANTHER" id="PTHR40062:SF1">
    <property type="entry name" value="GLOBAL TRANSCRIPTIONAL REGULATOR CODY"/>
    <property type="match status" value="1"/>
</dbReference>
<dbReference type="PANTHER" id="PTHR40062">
    <property type="entry name" value="GTP-SENSING TRANSCRIPTIONAL PLEIOTROPIC REPRESSOR CODY"/>
    <property type="match status" value="1"/>
</dbReference>
<dbReference type="Pfam" id="PF06018">
    <property type="entry name" value="CodY"/>
    <property type="match status" value="1"/>
</dbReference>
<dbReference type="Pfam" id="PF08222">
    <property type="entry name" value="HTH_CodY"/>
    <property type="match status" value="1"/>
</dbReference>
<dbReference type="PIRSF" id="PIRSF011572">
    <property type="entry name" value="GTP_sensing_CodY"/>
    <property type="match status" value="1"/>
</dbReference>
<dbReference type="SUPFAM" id="SSF46785">
    <property type="entry name" value="Winged helix' DNA-binding domain"/>
    <property type="match status" value="1"/>
</dbReference>
<proteinExistence type="inferred from homology"/>
<comment type="function">
    <text evidence="1">DNA-binding global transcriptional regulator which is involved in the adaptive response to starvation and acts by directly or indirectly controlling the expression of numerous genes in response to nutrient availability. During rapid exponential growth, CodY is highly active and represses genes whose products allow adaptation to nutrient depletion.</text>
</comment>
<comment type="subcellular location">
    <subcellularLocation>
        <location evidence="1">Cytoplasm</location>
    </subcellularLocation>
</comment>
<comment type="similarity">
    <text evidence="1">Belongs to the CodY family.</text>
</comment>
<organism>
    <name type="scientific">Streptococcus pneumoniae (strain ATCC BAA-255 / R6)</name>
    <dbReference type="NCBI Taxonomy" id="171101"/>
    <lineage>
        <taxon>Bacteria</taxon>
        <taxon>Bacillati</taxon>
        <taxon>Bacillota</taxon>
        <taxon>Bacilli</taxon>
        <taxon>Lactobacillales</taxon>
        <taxon>Streptococcaceae</taxon>
        <taxon>Streptococcus</taxon>
    </lineage>
</organism>
<evidence type="ECO:0000255" key="1">
    <source>
        <dbReference type="HAMAP-Rule" id="MF_00621"/>
    </source>
</evidence>
<name>CODY_STRR6</name>